<evidence type="ECO:0000250" key="1">
    <source>
        <dbReference type="UniProtKB" id="P0A817"/>
    </source>
</evidence>
<evidence type="ECO:0000250" key="2">
    <source>
        <dbReference type="UniProtKB" id="P13444"/>
    </source>
</evidence>
<evidence type="ECO:0000250" key="3">
    <source>
        <dbReference type="UniProtKB" id="Q00266"/>
    </source>
</evidence>
<evidence type="ECO:0000305" key="4"/>
<protein>
    <recommendedName>
        <fullName>S-adenosylmethionine synthase</fullName>
        <shortName>AdoMet synthase</shortName>
        <ecNumber evidence="3">2.5.1.6</ecNumber>
    </recommendedName>
    <alternativeName>
        <fullName>Methionine adenosyltransferase</fullName>
        <shortName>MAT</shortName>
    </alternativeName>
</protein>
<feature type="chain" id="PRO_0000327778" description="S-adenosylmethionine synthase">
    <location>
        <begin position="1"/>
        <end position="384"/>
    </location>
</feature>
<feature type="binding site" evidence="2">
    <location>
        <position position="9"/>
    </location>
    <ligand>
        <name>Mg(2+)</name>
        <dbReference type="ChEBI" id="CHEBI:18420"/>
    </ligand>
</feature>
<feature type="binding site" description="in other chain" evidence="3">
    <location>
        <position position="15"/>
    </location>
    <ligand>
        <name>ATP</name>
        <dbReference type="ChEBI" id="CHEBI:30616"/>
        <note>ligand shared between two neighboring subunits</note>
    </ligand>
</feature>
<feature type="binding site" evidence="1">
    <location>
        <position position="43"/>
    </location>
    <ligand>
        <name>K(+)</name>
        <dbReference type="ChEBI" id="CHEBI:29103"/>
    </ligand>
</feature>
<feature type="binding site" description="in other chain" evidence="1">
    <location>
        <position position="56"/>
    </location>
    <ligand>
        <name>L-methionine</name>
        <dbReference type="ChEBI" id="CHEBI:57844"/>
        <note>ligand shared between two neighboring subunits</note>
    </ligand>
</feature>
<feature type="binding site" description="in other chain" evidence="1">
    <location>
        <position position="99"/>
    </location>
    <ligand>
        <name>L-methionine</name>
        <dbReference type="ChEBI" id="CHEBI:57844"/>
        <note>ligand shared between two neighboring subunits</note>
    </ligand>
</feature>
<feature type="binding site" description="in other chain" evidence="3">
    <location>
        <begin position="166"/>
        <end position="168"/>
    </location>
    <ligand>
        <name>ATP</name>
        <dbReference type="ChEBI" id="CHEBI:30616"/>
        <note>ligand shared between two neighboring subunits</note>
    </ligand>
</feature>
<feature type="binding site" description="in other chain" evidence="3">
    <location>
        <begin position="234"/>
        <end position="237"/>
    </location>
    <ligand>
        <name>ATP</name>
        <dbReference type="ChEBI" id="CHEBI:30616"/>
        <note>ligand shared between two neighboring subunits</note>
    </ligand>
</feature>
<feature type="binding site" description="in other chain" evidence="3">
    <location>
        <position position="245"/>
    </location>
    <ligand>
        <name>ATP</name>
        <dbReference type="ChEBI" id="CHEBI:30616"/>
        <note>ligand shared between two neighboring subunits</note>
    </ligand>
</feature>
<feature type="binding site" evidence="1">
    <location>
        <position position="245"/>
    </location>
    <ligand>
        <name>L-methionine</name>
        <dbReference type="ChEBI" id="CHEBI:57844"/>
        <note>ligand shared between two neighboring subunits</note>
    </ligand>
</feature>
<feature type="binding site" description="in other chain" evidence="1">
    <location>
        <begin position="251"/>
        <end position="252"/>
    </location>
    <ligand>
        <name>ATP</name>
        <dbReference type="ChEBI" id="CHEBI:30616"/>
        <note>ligand shared between two neighboring subunits</note>
    </ligand>
</feature>
<feature type="binding site" evidence="1">
    <location>
        <position position="268"/>
    </location>
    <ligand>
        <name>ATP</name>
        <dbReference type="ChEBI" id="CHEBI:30616"/>
        <note>ligand shared between two neighboring subunits</note>
    </ligand>
</feature>
<feature type="binding site" evidence="1">
    <location>
        <position position="272"/>
    </location>
    <ligand>
        <name>ATP</name>
        <dbReference type="ChEBI" id="CHEBI:30616"/>
        <note>ligand shared between two neighboring subunits</note>
    </ligand>
</feature>
<feature type="binding site" evidence="2">
    <location>
        <position position="276"/>
    </location>
    <ligand>
        <name>ATP</name>
        <dbReference type="ChEBI" id="CHEBI:30616"/>
        <note>ligand shared between two neighboring subunits</note>
    </ligand>
</feature>
<feature type="binding site" description="in other chain" evidence="1">
    <location>
        <position position="276"/>
    </location>
    <ligand>
        <name>L-methionine</name>
        <dbReference type="ChEBI" id="CHEBI:57844"/>
        <note>ligand shared between two neighboring subunits</note>
    </ligand>
</feature>
<accession>Q54F07</accession>
<name>METK_DICDI</name>
<keyword id="KW-0067">ATP-binding</keyword>
<keyword id="KW-0903">Direct protein sequencing</keyword>
<keyword id="KW-0460">Magnesium</keyword>
<keyword id="KW-0479">Metal-binding</keyword>
<keyword id="KW-0547">Nucleotide-binding</keyword>
<keyword id="KW-0554">One-carbon metabolism</keyword>
<keyword id="KW-0630">Potassium</keyword>
<keyword id="KW-1185">Reference proteome</keyword>
<keyword id="KW-0808">Transferase</keyword>
<proteinExistence type="evidence at protein level"/>
<organism>
    <name type="scientific">Dictyostelium discoideum</name>
    <name type="common">Social amoeba</name>
    <dbReference type="NCBI Taxonomy" id="44689"/>
    <lineage>
        <taxon>Eukaryota</taxon>
        <taxon>Amoebozoa</taxon>
        <taxon>Evosea</taxon>
        <taxon>Eumycetozoa</taxon>
        <taxon>Dictyostelia</taxon>
        <taxon>Dictyosteliales</taxon>
        <taxon>Dictyosteliaceae</taxon>
        <taxon>Dictyostelium</taxon>
    </lineage>
</organism>
<sequence>MSSYLFTSESVTEGHPDKICDQVSDAVLDACLAQDPLSKVACETATKTGMVMILGEITTKANVDYQKVVREAVKKIGYDDSSKGFDYKTCNVLVAIEQQSPDIAQGVHIGKVNPEDIGAGDQGHMFGYATNETPTLMPLTHFLASELVNKLTELRHNGTLAWARPDAKTQVTVEYKKEGHKITPVRVHTIVISTQHDEKVTNEQIRADLKELVIKAVVPAQYLDDNTIYHLNPSGRFVIGGPMGDSGLTGRKIIIDSYGGWGAHGGGAFSGKDATKVDRSGAYAARWIAKSLVAAGLADRCLVQVSYSIGVAKPLSVFVDTYGTGKKTDAEILAIIDNNFDLRPGCLMRDLQLTRPIFQKTASGGHFGRNDPDFTWETVKELKM</sequence>
<gene>
    <name type="primary">metK</name>
    <name type="ORF">DDB_G0291179</name>
</gene>
<dbReference type="EC" id="2.5.1.6" evidence="3"/>
<dbReference type="EMBL" id="AAFI02000175">
    <property type="protein sequence ID" value="EAL61873.1"/>
    <property type="molecule type" value="Genomic_DNA"/>
</dbReference>
<dbReference type="RefSeq" id="XP_635383.1">
    <property type="nucleotide sequence ID" value="XM_630291.1"/>
</dbReference>
<dbReference type="SMR" id="Q54F07"/>
<dbReference type="FunCoup" id="Q54F07">
    <property type="interactions" value="400"/>
</dbReference>
<dbReference type="STRING" id="44689.Q54F07"/>
<dbReference type="PaxDb" id="44689-DDB0230070"/>
<dbReference type="EnsemblProtists" id="EAL61873">
    <property type="protein sequence ID" value="EAL61873"/>
    <property type="gene ID" value="DDB_G0291179"/>
</dbReference>
<dbReference type="GeneID" id="8628031"/>
<dbReference type="KEGG" id="ddi:DDB_G0291179"/>
<dbReference type="dictyBase" id="DDB_G0291179">
    <property type="gene designation" value="metK"/>
</dbReference>
<dbReference type="VEuPathDB" id="AmoebaDB:DDB_G0291179"/>
<dbReference type="eggNOG" id="KOG1506">
    <property type="taxonomic scope" value="Eukaryota"/>
</dbReference>
<dbReference type="HOGENOM" id="CLU_041802_0_1_1"/>
<dbReference type="InParanoid" id="Q54F07"/>
<dbReference type="OMA" id="ASYMARY"/>
<dbReference type="PhylomeDB" id="Q54F07"/>
<dbReference type="Reactome" id="R-DDI-156581">
    <property type="pathway name" value="Methylation"/>
</dbReference>
<dbReference type="Reactome" id="R-DDI-1614635">
    <property type="pathway name" value="Sulfur amino acid metabolism"/>
</dbReference>
<dbReference type="Reactome" id="R-DDI-2408508">
    <property type="pathway name" value="Metabolism of ingested SeMet, Sec, MeSec into H2Se"/>
</dbReference>
<dbReference type="UniPathway" id="UPA00315">
    <property type="reaction ID" value="UER00080"/>
</dbReference>
<dbReference type="PRO" id="PR:Q54F07"/>
<dbReference type="Proteomes" id="UP000002195">
    <property type="component" value="Chromosome 5"/>
</dbReference>
<dbReference type="GO" id="GO:0005829">
    <property type="term" value="C:cytosol"/>
    <property type="evidence" value="ECO:0000318"/>
    <property type="project" value="GO_Central"/>
</dbReference>
<dbReference type="GO" id="GO:0031012">
    <property type="term" value="C:extracellular matrix"/>
    <property type="evidence" value="ECO:0007005"/>
    <property type="project" value="dictyBase"/>
</dbReference>
<dbReference type="GO" id="GO:0048269">
    <property type="term" value="C:methionine adenosyltransferase complex"/>
    <property type="evidence" value="ECO:0000250"/>
    <property type="project" value="dictyBase"/>
</dbReference>
<dbReference type="GO" id="GO:0045335">
    <property type="term" value="C:phagocytic vesicle"/>
    <property type="evidence" value="ECO:0007005"/>
    <property type="project" value="dictyBase"/>
</dbReference>
<dbReference type="GO" id="GO:0005524">
    <property type="term" value="F:ATP binding"/>
    <property type="evidence" value="ECO:0007669"/>
    <property type="project" value="UniProtKB-KW"/>
</dbReference>
<dbReference type="GO" id="GO:0046872">
    <property type="term" value="F:metal ion binding"/>
    <property type="evidence" value="ECO:0007669"/>
    <property type="project" value="UniProtKB-KW"/>
</dbReference>
<dbReference type="GO" id="GO:0004478">
    <property type="term" value="F:methionine adenosyltransferase activity"/>
    <property type="evidence" value="ECO:0000250"/>
    <property type="project" value="dictyBase"/>
</dbReference>
<dbReference type="GO" id="GO:0006555">
    <property type="term" value="P:methionine metabolic process"/>
    <property type="evidence" value="ECO:0000250"/>
    <property type="project" value="dictyBase"/>
</dbReference>
<dbReference type="GO" id="GO:0006730">
    <property type="term" value="P:one-carbon metabolic process"/>
    <property type="evidence" value="ECO:0007669"/>
    <property type="project" value="UniProtKB-KW"/>
</dbReference>
<dbReference type="GO" id="GO:0006556">
    <property type="term" value="P:S-adenosylmethionine biosynthetic process"/>
    <property type="evidence" value="ECO:0000318"/>
    <property type="project" value="GO_Central"/>
</dbReference>
<dbReference type="CDD" id="cd18079">
    <property type="entry name" value="S-AdoMet_synt"/>
    <property type="match status" value="1"/>
</dbReference>
<dbReference type="FunFam" id="3.30.300.10:FF:000001">
    <property type="entry name" value="S-adenosylmethionine synthase"/>
    <property type="match status" value="1"/>
</dbReference>
<dbReference type="FunFam" id="3.30.300.10:FF:000003">
    <property type="entry name" value="S-adenosylmethionine synthase"/>
    <property type="match status" value="1"/>
</dbReference>
<dbReference type="FunFam" id="3.30.300.10:FF:000004">
    <property type="entry name" value="S-adenosylmethionine synthase"/>
    <property type="match status" value="1"/>
</dbReference>
<dbReference type="Gene3D" id="3.30.300.10">
    <property type="match status" value="3"/>
</dbReference>
<dbReference type="HAMAP" id="MF_00086">
    <property type="entry name" value="S_AdoMet_synth1"/>
    <property type="match status" value="1"/>
</dbReference>
<dbReference type="InterPro" id="IPR022631">
    <property type="entry name" value="ADOMET_SYNTHASE_CS"/>
</dbReference>
<dbReference type="InterPro" id="IPR022630">
    <property type="entry name" value="S-AdoMet_synt_C"/>
</dbReference>
<dbReference type="InterPro" id="IPR022629">
    <property type="entry name" value="S-AdoMet_synt_central"/>
</dbReference>
<dbReference type="InterPro" id="IPR022628">
    <property type="entry name" value="S-AdoMet_synt_N"/>
</dbReference>
<dbReference type="InterPro" id="IPR002133">
    <property type="entry name" value="S-AdoMet_synthetase"/>
</dbReference>
<dbReference type="InterPro" id="IPR022636">
    <property type="entry name" value="S-AdoMet_synthetase_sfam"/>
</dbReference>
<dbReference type="NCBIfam" id="TIGR01034">
    <property type="entry name" value="metK"/>
    <property type="match status" value="1"/>
</dbReference>
<dbReference type="PANTHER" id="PTHR11964">
    <property type="entry name" value="S-ADENOSYLMETHIONINE SYNTHETASE"/>
    <property type="match status" value="1"/>
</dbReference>
<dbReference type="Pfam" id="PF02773">
    <property type="entry name" value="S-AdoMet_synt_C"/>
    <property type="match status" value="1"/>
</dbReference>
<dbReference type="Pfam" id="PF02772">
    <property type="entry name" value="S-AdoMet_synt_M"/>
    <property type="match status" value="1"/>
</dbReference>
<dbReference type="Pfam" id="PF00438">
    <property type="entry name" value="S-AdoMet_synt_N"/>
    <property type="match status" value="1"/>
</dbReference>
<dbReference type="PIRSF" id="PIRSF000497">
    <property type="entry name" value="MAT"/>
    <property type="match status" value="1"/>
</dbReference>
<dbReference type="SUPFAM" id="SSF55973">
    <property type="entry name" value="S-adenosylmethionine synthetase"/>
    <property type="match status" value="3"/>
</dbReference>
<dbReference type="PROSITE" id="PS00376">
    <property type="entry name" value="ADOMET_SYNTHASE_1"/>
    <property type="match status" value="1"/>
</dbReference>
<dbReference type="PROSITE" id="PS00377">
    <property type="entry name" value="ADOMET_SYNTHASE_2"/>
    <property type="match status" value="1"/>
</dbReference>
<reference key="1">
    <citation type="journal article" date="2005" name="Nature">
        <title>The genome of the social amoeba Dictyostelium discoideum.</title>
        <authorList>
            <person name="Eichinger L."/>
            <person name="Pachebat J.A."/>
            <person name="Gloeckner G."/>
            <person name="Rajandream M.A."/>
            <person name="Sucgang R."/>
            <person name="Berriman M."/>
            <person name="Song J."/>
            <person name="Olsen R."/>
            <person name="Szafranski K."/>
            <person name="Xu Q."/>
            <person name="Tunggal B."/>
            <person name="Kummerfeld S."/>
            <person name="Madera M."/>
            <person name="Konfortov B.A."/>
            <person name="Rivero F."/>
            <person name="Bankier A.T."/>
            <person name="Lehmann R."/>
            <person name="Hamlin N."/>
            <person name="Davies R."/>
            <person name="Gaudet P."/>
            <person name="Fey P."/>
            <person name="Pilcher K."/>
            <person name="Chen G."/>
            <person name="Saunders D."/>
            <person name="Sodergren E.J."/>
            <person name="Davis P."/>
            <person name="Kerhornou A."/>
            <person name="Nie X."/>
            <person name="Hall N."/>
            <person name="Anjard C."/>
            <person name="Hemphill L."/>
            <person name="Bason N."/>
            <person name="Farbrother P."/>
            <person name="Desany B."/>
            <person name="Just E."/>
            <person name="Morio T."/>
            <person name="Rost R."/>
            <person name="Churcher C.M."/>
            <person name="Cooper J."/>
            <person name="Haydock S."/>
            <person name="van Driessche N."/>
            <person name="Cronin A."/>
            <person name="Goodhead I."/>
            <person name="Muzny D.M."/>
            <person name="Mourier T."/>
            <person name="Pain A."/>
            <person name="Lu M."/>
            <person name="Harper D."/>
            <person name="Lindsay R."/>
            <person name="Hauser H."/>
            <person name="James K.D."/>
            <person name="Quiles M."/>
            <person name="Madan Babu M."/>
            <person name="Saito T."/>
            <person name="Buchrieser C."/>
            <person name="Wardroper A."/>
            <person name="Felder M."/>
            <person name="Thangavelu M."/>
            <person name="Johnson D."/>
            <person name="Knights A."/>
            <person name="Loulseged H."/>
            <person name="Mungall K.L."/>
            <person name="Oliver K."/>
            <person name="Price C."/>
            <person name="Quail M.A."/>
            <person name="Urushihara H."/>
            <person name="Hernandez J."/>
            <person name="Rabbinowitsch E."/>
            <person name="Steffen D."/>
            <person name="Sanders M."/>
            <person name="Ma J."/>
            <person name="Kohara Y."/>
            <person name="Sharp S."/>
            <person name="Simmonds M.N."/>
            <person name="Spiegler S."/>
            <person name="Tivey A."/>
            <person name="Sugano S."/>
            <person name="White B."/>
            <person name="Walker D."/>
            <person name="Woodward J.R."/>
            <person name="Winckler T."/>
            <person name="Tanaka Y."/>
            <person name="Shaulsky G."/>
            <person name="Schleicher M."/>
            <person name="Weinstock G.M."/>
            <person name="Rosenthal A."/>
            <person name="Cox E.C."/>
            <person name="Chisholm R.L."/>
            <person name="Gibbs R.A."/>
            <person name="Loomis W.F."/>
            <person name="Platzer M."/>
            <person name="Kay R.R."/>
            <person name="Williams J.G."/>
            <person name="Dear P.H."/>
            <person name="Noegel A.A."/>
            <person name="Barrell B.G."/>
            <person name="Kuspa A."/>
        </authorList>
    </citation>
    <scope>NUCLEOTIDE SEQUENCE [LARGE SCALE GENOMIC DNA]</scope>
    <source>
        <strain>AX4</strain>
    </source>
</reference>
<reference key="2">
    <citation type="submission" date="2007-07" db="UniProtKB">
        <authorList>
            <person name="Bienvenut W.V."/>
            <person name="Patel H."/>
            <person name="Brunton V.G."/>
            <person name="Frame M.C."/>
        </authorList>
    </citation>
    <scope>PROTEIN SEQUENCE OF 156-176; 237-272; 291-300 AND 350-360</scope>
    <scope>IDENTIFICATION BY MASS SPECTROMETRY</scope>
</reference>
<reference key="3">
    <citation type="journal article" date="2006" name="Mol. Cell. Proteomics">
        <title>Proteomics fingerprinting of phagosome maturation and evidence for the role of a Galpha during uptake.</title>
        <authorList>
            <person name="Gotthardt D."/>
            <person name="Blancheteau V."/>
            <person name="Bosserhoff A."/>
            <person name="Ruppert T."/>
            <person name="Delorenzi M."/>
            <person name="Soldati T."/>
        </authorList>
    </citation>
    <scope>IDENTIFICATION BY MASS SPECTROMETRY [LARGE SCALE ANALYSIS]</scope>
    <source>
        <strain>AX2</strain>
    </source>
</reference>
<comment type="function">
    <text evidence="3">Catalyzes the formation of S-adenosylmethionine from methionine and ATP. The reaction comprises two steps that are both catalyzed by the same enzyme: formation of S-adenosylmethionine (AdoMet) and triphosphate, and subsequent hydrolysis of the triphosphate.</text>
</comment>
<comment type="catalytic activity">
    <reaction evidence="3">
        <text>L-methionine + ATP + H2O = S-adenosyl-L-methionine + phosphate + diphosphate</text>
        <dbReference type="Rhea" id="RHEA:21080"/>
        <dbReference type="ChEBI" id="CHEBI:15377"/>
        <dbReference type="ChEBI" id="CHEBI:30616"/>
        <dbReference type="ChEBI" id="CHEBI:33019"/>
        <dbReference type="ChEBI" id="CHEBI:43474"/>
        <dbReference type="ChEBI" id="CHEBI:57844"/>
        <dbReference type="ChEBI" id="CHEBI:59789"/>
        <dbReference type="EC" id="2.5.1.6"/>
    </reaction>
</comment>
<comment type="cofactor">
    <cofactor evidence="2">
        <name>Mg(2+)</name>
        <dbReference type="ChEBI" id="CHEBI:18420"/>
    </cofactor>
    <text evidence="2">Binds 2 magnesium ions per subunit. The magnesium ions interact primarily with the substrate.</text>
</comment>
<comment type="cofactor">
    <cofactor evidence="2">
        <name>K(+)</name>
        <dbReference type="ChEBI" id="CHEBI:29103"/>
    </cofactor>
    <text evidence="2">Binds 1 potassium ion per subunit. The potassium ion interacts primarily with the substrate.</text>
</comment>
<comment type="pathway">
    <text evidence="3">Amino-acid biosynthesis; S-adenosyl-L-methionine biosynthesis; S-adenosyl-L-methionine from L-methionine: step 1/1.</text>
</comment>
<comment type="similarity">
    <text evidence="4">Belongs to the AdoMet synthase family.</text>
</comment>